<organism>
    <name type="scientific">Aster yellows witches'-broom phytoplasma (strain AYWB)</name>
    <dbReference type="NCBI Taxonomy" id="322098"/>
    <lineage>
        <taxon>Bacteria</taxon>
        <taxon>Bacillati</taxon>
        <taxon>Mycoplasmatota</taxon>
        <taxon>Mollicutes</taxon>
        <taxon>Acholeplasmatales</taxon>
        <taxon>Acholeplasmataceae</taxon>
        <taxon>Candidatus Phytoplasma</taxon>
        <taxon>16SrI (Aster yellows group)</taxon>
    </lineage>
</organism>
<proteinExistence type="inferred from homology"/>
<dbReference type="EMBL" id="CP000061">
    <property type="protein sequence ID" value="ABC65123.1"/>
    <property type="molecule type" value="Genomic_DNA"/>
</dbReference>
<dbReference type="RefSeq" id="WP_011412290.1">
    <property type="nucleotide sequence ID" value="NC_007716.1"/>
</dbReference>
<dbReference type="SMR" id="Q2NKC0"/>
<dbReference type="STRING" id="322098.AYWB_006"/>
<dbReference type="KEGG" id="ayw:AYWB_006"/>
<dbReference type="eggNOG" id="COG0359">
    <property type="taxonomic scope" value="Bacteria"/>
</dbReference>
<dbReference type="eggNOG" id="COG3887">
    <property type="taxonomic scope" value="Bacteria"/>
</dbReference>
<dbReference type="HOGENOM" id="CLU_018278_0_0_14"/>
<dbReference type="OrthoDB" id="9759476at2"/>
<dbReference type="PhylomeDB" id="Q2NKC0"/>
<dbReference type="Proteomes" id="UP000001934">
    <property type="component" value="Chromosome"/>
</dbReference>
<dbReference type="GO" id="GO:0005886">
    <property type="term" value="C:plasma membrane"/>
    <property type="evidence" value="ECO:0007669"/>
    <property type="project" value="UniProtKB-SubCell"/>
</dbReference>
<dbReference type="GO" id="GO:1990904">
    <property type="term" value="C:ribonucleoprotein complex"/>
    <property type="evidence" value="ECO:0007669"/>
    <property type="project" value="UniProtKB-KW"/>
</dbReference>
<dbReference type="GO" id="GO:0005840">
    <property type="term" value="C:ribosome"/>
    <property type="evidence" value="ECO:0007669"/>
    <property type="project" value="UniProtKB-KW"/>
</dbReference>
<dbReference type="GO" id="GO:0019843">
    <property type="term" value="F:rRNA binding"/>
    <property type="evidence" value="ECO:0007669"/>
    <property type="project" value="UniProtKB-UniRule"/>
</dbReference>
<dbReference type="GO" id="GO:0003735">
    <property type="term" value="F:structural constituent of ribosome"/>
    <property type="evidence" value="ECO:0007669"/>
    <property type="project" value="InterPro"/>
</dbReference>
<dbReference type="GO" id="GO:0006412">
    <property type="term" value="P:translation"/>
    <property type="evidence" value="ECO:0007669"/>
    <property type="project" value="UniProtKB-UniRule"/>
</dbReference>
<dbReference type="Gene3D" id="3.10.310.30">
    <property type="match status" value="1"/>
</dbReference>
<dbReference type="Gene3D" id="3.90.1640.10">
    <property type="entry name" value="inorganic pyrophosphatase (n-terminal core)"/>
    <property type="match status" value="1"/>
</dbReference>
<dbReference type="Gene3D" id="3.30.450.20">
    <property type="entry name" value="PAS domain"/>
    <property type="match status" value="1"/>
</dbReference>
<dbReference type="Gene3D" id="3.10.430.100">
    <property type="entry name" value="Ribosomal protein L9, C-terminal domain"/>
    <property type="match status" value="1"/>
</dbReference>
<dbReference type="Gene3D" id="3.40.5.10">
    <property type="entry name" value="Ribosomal protein L9, N-terminal domain"/>
    <property type="match status" value="1"/>
</dbReference>
<dbReference type="HAMAP" id="MF_00503">
    <property type="entry name" value="Ribosomal_bL9"/>
    <property type="match status" value="1"/>
</dbReference>
<dbReference type="InterPro" id="IPR001667">
    <property type="entry name" value="DDH_dom"/>
</dbReference>
<dbReference type="InterPro" id="IPR038763">
    <property type="entry name" value="DHH_sf"/>
</dbReference>
<dbReference type="InterPro" id="IPR003156">
    <property type="entry name" value="DHHA1_dom"/>
</dbReference>
<dbReference type="InterPro" id="IPR049553">
    <property type="entry name" value="GdpP-like_PAS"/>
</dbReference>
<dbReference type="InterPro" id="IPR000160">
    <property type="entry name" value="GGDEF_dom"/>
</dbReference>
<dbReference type="InterPro" id="IPR051319">
    <property type="entry name" value="Oligoribo/pAp-PDE_c-di-AMP_PDE"/>
</dbReference>
<dbReference type="InterPro" id="IPR009027">
    <property type="entry name" value="Ribosomal_bL9/RNase_H1_N"/>
</dbReference>
<dbReference type="InterPro" id="IPR020594">
    <property type="entry name" value="Ribosomal_bL9_bac/chp"/>
</dbReference>
<dbReference type="InterPro" id="IPR020069">
    <property type="entry name" value="Ribosomal_bL9_C"/>
</dbReference>
<dbReference type="InterPro" id="IPR036791">
    <property type="entry name" value="Ribosomal_bL9_C_sf"/>
</dbReference>
<dbReference type="InterPro" id="IPR020070">
    <property type="entry name" value="Ribosomal_bL9_N"/>
</dbReference>
<dbReference type="InterPro" id="IPR036935">
    <property type="entry name" value="Ribosomal_bL9_N_sf"/>
</dbReference>
<dbReference type="NCBIfam" id="TIGR00158">
    <property type="entry name" value="L9"/>
    <property type="match status" value="1"/>
</dbReference>
<dbReference type="NCBIfam" id="NF011110">
    <property type="entry name" value="PRK14538.1"/>
    <property type="match status" value="1"/>
</dbReference>
<dbReference type="PANTHER" id="PTHR47618">
    <property type="entry name" value="BIFUNCTIONAL OLIGORIBONUCLEASE AND PAP PHOSPHATASE NRNA"/>
    <property type="match status" value="1"/>
</dbReference>
<dbReference type="PANTHER" id="PTHR47618:SF2">
    <property type="entry name" value="CYCLIC-DI-AMP PHOSPHODIESTERASE GDPP"/>
    <property type="match status" value="1"/>
</dbReference>
<dbReference type="Pfam" id="PF01368">
    <property type="entry name" value="DHH"/>
    <property type="match status" value="1"/>
</dbReference>
<dbReference type="Pfam" id="PF02272">
    <property type="entry name" value="DHHA1"/>
    <property type="match status" value="1"/>
</dbReference>
<dbReference type="Pfam" id="PF24898">
    <property type="entry name" value="GGDEF_GdpP"/>
    <property type="match status" value="1"/>
</dbReference>
<dbReference type="Pfam" id="PF21370">
    <property type="entry name" value="PAS_GdpP"/>
    <property type="match status" value="1"/>
</dbReference>
<dbReference type="Pfam" id="PF03948">
    <property type="entry name" value="Ribosomal_L9_C"/>
    <property type="match status" value="1"/>
</dbReference>
<dbReference type="Pfam" id="PF01281">
    <property type="entry name" value="Ribosomal_L9_N"/>
    <property type="match status" value="1"/>
</dbReference>
<dbReference type="SMART" id="SM00267">
    <property type="entry name" value="GGDEF"/>
    <property type="match status" value="1"/>
</dbReference>
<dbReference type="SUPFAM" id="SSF64182">
    <property type="entry name" value="DHH phosphoesterases"/>
    <property type="match status" value="1"/>
</dbReference>
<dbReference type="SUPFAM" id="SSF55658">
    <property type="entry name" value="L9 N-domain-like"/>
    <property type="match status" value="1"/>
</dbReference>
<dbReference type="SUPFAM" id="SSF55653">
    <property type="entry name" value="Ribosomal protein L9 C-domain"/>
    <property type="match status" value="1"/>
</dbReference>
<dbReference type="PROSITE" id="PS50887">
    <property type="entry name" value="GGDEF"/>
    <property type="match status" value="1"/>
</dbReference>
<name>RL9_AYWBP</name>
<sequence length="849" mass="96939">MFSKNKHNTKFIVIACVIVVLILILFCFDFQNIQEIIETINQLTNNQNPSKNTASEMSGMRRKIIFFIFNFFGKIILASFIISFLLHIKKNAQIKRLKNKLSLWSKLSFHVSQIGEEVLNELPIGIVLIDISSQEIQWLNPYASFILKNPEINSPLTQINENMAQLISTSDTIPKTIITLKNQKFECFYKKDLSVFYLFDATEKEQIKHLFLQKTLAIAMIAFDNLAESLIRYDLSEQSQIQGEYLSALSDYIEPYESYLKQLIDDRFLLLLNRQNLDKMLENKFSILDTIRNISHKYQLKVTLSMGIACWNLSYEKLATYSQNAIELAQKRGGDQVVVNIENEKIKYFGAKIASLSKQSKVHARINAQNLVDILKKNPHCFIMGHTHTDLDALGSVIAFYKIAATIHPENNNYIILDEEKLDKSLIPVYHQLIKTESKKTLNIITTQQASKMIKDNSLIAVLDTQTKDMLNSPELLSLTPNIVVVDHHRATEEIIPSIFSYVESSASSTVELLVEVMGFLEKEVHITAFEASIMYAGILIDTNAFIYRTSSRTFEVASKLKDLGADAIEVKSWLRKDFDKVLEINKLISEMEIFMDRFAIIQSSEIYENRSFLAQVAESVLNIQNVDAAFMIAKIADNKIAISARSYNEINVQTIMEQMEGGGHLNSAATQLEGTNIKTVTDTLKHFLKLEYEKGEKNMEIILLTDISNKGKKHEIIKVNNGYGNFLIQNKKALLADKANLAVIKQTQILEQEQKRNHELLMQKLKQEIDDKKITLDIQLGPKGKIYGKITLKQISEEFLKVHNITLDRKKISLESEIIAIGIYPVDVFLTDQIKATFFLNVTERKSK</sequence>
<gene>
    <name evidence="2" type="primary">rplI</name>
    <name type="ordered locus">AYWB_006</name>
</gene>
<feature type="chain" id="PRO_0000258442" description="Membrane protein-large ribosomal subunit bL9 fusion protein">
    <location>
        <begin position="1"/>
        <end position="849"/>
    </location>
</feature>
<feature type="transmembrane region" description="Helical" evidence="1">
    <location>
        <begin position="11"/>
        <end position="31"/>
    </location>
</feature>
<feature type="transmembrane region" description="Helical" evidence="1">
    <location>
        <begin position="64"/>
        <end position="84"/>
    </location>
</feature>
<feature type="domain" description="GGDEF" evidence="3">
    <location>
        <begin position="214"/>
        <end position="342"/>
    </location>
</feature>
<feature type="region of interest" description="Unknown">
    <location>
        <begin position="1"/>
        <end position="680"/>
    </location>
</feature>
<feature type="region of interest" description="Large ribosomal subunit protein bL9" evidence="2">
    <location>
        <begin position="681"/>
        <end position="849"/>
    </location>
</feature>
<keyword id="KW-1003">Cell membrane</keyword>
<keyword id="KW-0472">Membrane</keyword>
<keyword id="KW-0687">Ribonucleoprotein</keyword>
<keyword id="KW-0689">Ribosomal protein</keyword>
<keyword id="KW-0694">RNA-binding</keyword>
<keyword id="KW-0699">rRNA-binding</keyword>
<keyword id="KW-0812">Transmembrane</keyword>
<keyword id="KW-1133">Transmembrane helix</keyword>
<accession>Q2NKC0</accession>
<reference key="1">
    <citation type="journal article" date="2006" name="J. Bacteriol.">
        <title>Living with genome instability: the adaptation of phytoplasmas to diverse environments of their insect and plant hosts.</title>
        <authorList>
            <person name="Bai X."/>
            <person name="Zhang J."/>
            <person name="Ewing A."/>
            <person name="Miller S.A."/>
            <person name="Jancso Radek A."/>
            <person name="Shevchenko D.V."/>
            <person name="Tsukerman K."/>
            <person name="Walunas T."/>
            <person name="Lapidus A."/>
            <person name="Campbell J.W."/>
            <person name="Hogenhout S.A."/>
        </authorList>
    </citation>
    <scope>NUCLEOTIDE SEQUENCE [LARGE SCALE GENOMIC DNA]</scope>
    <source>
        <strain>AYWB</strain>
    </source>
</reference>
<evidence type="ECO:0000255" key="1"/>
<evidence type="ECO:0000255" key="2">
    <source>
        <dbReference type="HAMAP-Rule" id="MF_00503"/>
    </source>
</evidence>
<evidence type="ECO:0000255" key="3">
    <source>
        <dbReference type="PROSITE-ProRule" id="PRU00095"/>
    </source>
</evidence>
<evidence type="ECO:0000305" key="4"/>
<comment type="function">
    <text evidence="2">Binds to the 23S rRNA.</text>
</comment>
<comment type="subcellular location">
    <subcellularLocation>
        <location evidence="1">Cell membrane</location>
        <topology evidence="1">Multi-pass membrane protein</topology>
    </subcellularLocation>
</comment>
<comment type="miscellaneous">
    <text evidence="4">The large N-terminal domain has 2 potential transmembrane regions and a GGDEF domain.</text>
</comment>
<comment type="similarity">
    <text evidence="2">Belongs to the bacterial ribosomal protein bL9 family.</text>
</comment>
<protein>
    <recommendedName>
        <fullName evidence="4">Membrane protein-large ribosomal subunit bL9 fusion protein</fullName>
    </recommendedName>
    <alternativeName>
        <fullName>50S ribosomal protein L9</fullName>
    </alternativeName>
</protein>